<accession>Q75GK3</accession>
<accession>A0A0P0W0H2</accession>
<dbReference type="EMBL" id="AC145379">
    <property type="protein sequence ID" value="AAS07275.1"/>
    <property type="molecule type" value="Genomic_DNA"/>
</dbReference>
<dbReference type="EMBL" id="DP000009">
    <property type="protein sequence ID" value="ABF97773.1"/>
    <property type="molecule type" value="Genomic_DNA"/>
</dbReference>
<dbReference type="EMBL" id="AP008209">
    <property type="protein sequence ID" value="BAF12630.1"/>
    <property type="molecule type" value="Genomic_DNA"/>
</dbReference>
<dbReference type="EMBL" id="AP014959">
    <property type="protein sequence ID" value="BAS85386.1"/>
    <property type="molecule type" value="Genomic_DNA"/>
</dbReference>
<dbReference type="EMBL" id="CM000140">
    <property type="protein sequence ID" value="EEE59547.1"/>
    <property type="molecule type" value="Genomic_DNA"/>
</dbReference>
<dbReference type="EMBL" id="AK063673">
    <property type="protein sequence ID" value="BAG88816.1"/>
    <property type="molecule type" value="mRNA"/>
</dbReference>
<dbReference type="FunCoup" id="Q75GK3">
    <property type="interactions" value="853"/>
</dbReference>
<dbReference type="STRING" id="39947.Q75GK3"/>
<dbReference type="PaxDb" id="39947-Q75GK3"/>
<dbReference type="EnsemblPlants" id="Os03t0634000-01">
    <property type="protein sequence ID" value="Os03t0634000-01"/>
    <property type="gene ID" value="Os03g0634000"/>
</dbReference>
<dbReference type="Gramene" id="Os03t0634000-01">
    <property type="protein sequence ID" value="Os03t0634000-01"/>
    <property type="gene ID" value="Os03g0634000"/>
</dbReference>
<dbReference type="KEGG" id="dosa:Os03g0634000"/>
<dbReference type="eggNOG" id="ENOG502S7UG">
    <property type="taxonomic scope" value="Eukaryota"/>
</dbReference>
<dbReference type="HOGENOM" id="CLU_135887_1_1_1"/>
<dbReference type="InParanoid" id="Q75GK3"/>
<dbReference type="OMA" id="PPNEMAV"/>
<dbReference type="OrthoDB" id="1923722at2759"/>
<dbReference type="Proteomes" id="UP000000763">
    <property type="component" value="Chromosome 3"/>
</dbReference>
<dbReference type="Proteomes" id="UP000007752">
    <property type="component" value="Chromosome 3"/>
</dbReference>
<dbReference type="Proteomes" id="UP000059680">
    <property type="component" value="Chromosome 3"/>
</dbReference>
<dbReference type="GO" id="GO:0009535">
    <property type="term" value="C:chloroplast thylakoid membrane"/>
    <property type="evidence" value="ECO:0007669"/>
    <property type="project" value="UniProtKB-SubCell"/>
</dbReference>
<dbReference type="GO" id="GO:0043953">
    <property type="term" value="P:protein transport by the Tat complex"/>
    <property type="evidence" value="ECO:0007669"/>
    <property type="project" value="InterPro"/>
</dbReference>
<dbReference type="FunFam" id="1.20.5.3310:FF:000003">
    <property type="entry name" value="Sec-independent protein translocase protein TATB, chloroplastic"/>
    <property type="match status" value="1"/>
</dbReference>
<dbReference type="Gene3D" id="1.20.5.3310">
    <property type="match status" value="1"/>
</dbReference>
<dbReference type="HAMAP" id="MF_00236">
    <property type="entry name" value="TatA_E"/>
    <property type="match status" value="1"/>
</dbReference>
<dbReference type="InterPro" id="IPR003369">
    <property type="entry name" value="TatA/B/E"/>
</dbReference>
<dbReference type="InterPro" id="IPR006312">
    <property type="entry name" value="TatA/E"/>
</dbReference>
<dbReference type="NCBIfam" id="NF011429">
    <property type="entry name" value="PRK14857.1"/>
    <property type="match status" value="1"/>
</dbReference>
<dbReference type="NCBIfam" id="TIGR01411">
    <property type="entry name" value="tatAE"/>
    <property type="match status" value="1"/>
</dbReference>
<dbReference type="PANTHER" id="PTHR33162">
    <property type="entry name" value="SEC-INDEPENDENT PROTEIN TRANSLOCASE PROTEIN TATA, CHLOROPLASTIC"/>
    <property type="match status" value="1"/>
</dbReference>
<dbReference type="PANTHER" id="PTHR33162:SF1">
    <property type="entry name" value="SEC-INDEPENDENT PROTEIN TRANSLOCASE PROTEIN TATA, CHLOROPLASTIC"/>
    <property type="match status" value="1"/>
</dbReference>
<dbReference type="Pfam" id="PF02416">
    <property type="entry name" value="TatA_B_E"/>
    <property type="match status" value="1"/>
</dbReference>
<dbReference type="PRINTS" id="PR01506">
    <property type="entry name" value="TATBPROTEIN"/>
</dbReference>
<protein>
    <recommendedName>
        <fullName>Sec-independent protein translocase protein TATA, chloroplastic</fullName>
    </recommendedName>
    <alternativeName>
        <fullName>Protein THYLAKOID ASSEMBLY 4</fullName>
    </alternativeName>
    <alternativeName>
        <fullName>Protein TWIN-ARGININE TRANSLOCATION A</fullName>
    </alternativeName>
</protein>
<keyword id="KW-0150">Chloroplast</keyword>
<keyword id="KW-0472">Membrane</keyword>
<keyword id="KW-0934">Plastid</keyword>
<keyword id="KW-0653">Protein transport</keyword>
<keyword id="KW-1185">Reference proteome</keyword>
<keyword id="KW-0793">Thylakoid</keyword>
<keyword id="KW-0809">Transit peptide</keyword>
<keyword id="KW-0811">Translocation</keyword>
<keyword id="KW-0812">Transmembrane</keyword>
<keyword id="KW-1133">Transmembrane helix</keyword>
<keyword id="KW-0813">Transport</keyword>
<sequence length="170" mass="16659">MGMAPVATYPSSSSSSTLARPPCAAAGRAAAAGRARVAAAGMSSRASSFVTGGAGGLAVAVAARTRAGSGAGSRGGGAMGCKCLFGLGVPELVVIAGVAALVFGPKQLPEIGRSIGKTVKSFQQAAKEFETELKKESDDGGDQPPPPTETAVSDGGEEKELEASSSKEST</sequence>
<proteinExistence type="evidence at transcript level"/>
<gene>
    <name type="primary">TATA</name>
    <name type="synonym">THA4</name>
    <name type="ordered locus">Os03g0634000</name>
    <name type="ordered locus">LOC_Os03g43430</name>
    <name type="ORF">OsJ_11824</name>
    <name type="ORF">OSJNBa0010N03.14</name>
</gene>
<comment type="function">
    <text evidence="2">Part of the twin-arginine translocation (Tat) system that transports large folded proteins containing a characteristic twin-arginine motif in their signal peptide across the thylakoid membrane. Involved in delta pH-dependent protein transport required for chloroplast development, especially thylakoid membrane formation. TATC and TATB mediate precursor recognition, whereas TATA facilitates translocation.</text>
</comment>
<comment type="subunit">
    <text evidence="1">In thylakoid membranes, TATC and TATB form a large receptor complex, containing about eight TATC-TATB pairs, which binds the precursor protein. Twin arginine signal peptide promotes pH-triggered docking of TATA oligomers to TATC-TATB receptor complex, inducing a conformational switch of TATA that results in activation of the translocase. TATA dissociates from TATC-TATB upon completion of translocation (By similarity).</text>
</comment>
<comment type="subcellular location">
    <subcellularLocation>
        <location evidence="1">Plastid</location>
        <location evidence="1">Chloroplast thylakoid membrane</location>
        <topology evidence="1">Single-pass membrane protein</topology>
    </subcellularLocation>
    <text evidence="1">The C-terminus is located in the stroma.</text>
</comment>
<comment type="similarity">
    <text evidence="5">Belongs to the TatA/E family.</text>
</comment>
<evidence type="ECO:0000250" key="1"/>
<evidence type="ECO:0000250" key="2">
    <source>
        <dbReference type="UniProtKB" id="Q9XFJ8"/>
    </source>
</evidence>
<evidence type="ECO:0000255" key="3"/>
<evidence type="ECO:0000256" key="4">
    <source>
        <dbReference type="SAM" id="MobiDB-lite"/>
    </source>
</evidence>
<evidence type="ECO:0000305" key="5"/>
<reference key="1">
    <citation type="journal article" date="2005" name="Genome Res.">
        <title>Sequence, annotation, and analysis of synteny between rice chromosome 3 and diverged grass species.</title>
        <authorList>
            <consortium name="The rice chromosome 3 sequencing consortium"/>
            <person name="Buell C.R."/>
            <person name="Yuan Q."/>
            <person name="Ouyang S."/>
            <person name="Liu J."/>
            <person name="Zhu W."/>
            <person name="Wang A."/>
            <person name="Maiti R."/>
            <person name="Haas B."/>
            <person name="Wortman J."/>
            <person name="Pertea M."/>
            <person name="Jones K.M."/>
            <person name="Kim M."/>
            <person name="Overton L."/>
            <person name="Tsitrin T."/>
            <person name="Fadrosh D."/>
            <person name="Bera J."/>
            <person name="Weaver B."/>
            <person name="Jin S."/>
            <person name="Johri S."/>
            <person name="Reardon M."/>
            <person name="Webb K."/>
            <person name="Hill J."/>
            <person name="Moffat K."/>
            <person name="Tallon L."/>
            <person name="Van Aken S."/>
            <person name="Lewis M."/>
            <person name="Utterback T."/>
            <person name="Feldblyum T."/>
            <person name="Zismann V."/>
            <person name="Iobst S."/>
            <person name="Hsiao J."/>
            <person name="de Vazeille A.R."/>
            <person name="Salzberg S.L."/>
            <person name="White O."/>
            <person name="Fraser C.M."/>
            <person name="Yu Y."/>
            <person name="Kim H."/>
            <person name="Rambo T."/>
            <person name="Currie J."/>
            <person name="Collura K."/>
            <person name="Kernodle-Thompson S."/>
            <person name="Wei F."/>
            <person name="Kudrna K."/>
            <person name="Ammiraju J.S.S."/>
            <person name="Luo M."/>
            <person name="Goicoechea J.L."/>
            <person name="Wing R.A."/>
            <person name="Henry D."/>
            <person name="Oates R."/>
            <person name="Palmer M."/>
            <person name="Pries G."/>
            <person name="Saski C."/>
            <person name="Simmons J."/>
            <person name="Soderlund C."/>
            <person name="Nelson W."/>
            <person name="de la Bastide M."/>
            <person name="Spiegel L."/>
            <person name="Nascimento L."/>
            <person name="Huang E."/>
            <person name="Preston R."/>
            <person name="Zutavern T."/>
            <person name="Palmer L."/>
            <person name="O'Shaughnessy A."/>
            <person name="Dike S."/>
            <person name="McCombie W.R."/>
            <person name="Minx P."/>
            <person name="Cordum H."/>
            <person name="Wilson R."/>
            <person name="Jin W."/>
            <person name="Lee H.R."/>
            <person name="Jiang J."/>
            <person name="Jackson S."/>
        </authorList>
    </citation>
    <scope>NUCLEOTIDE SEQUENCE [LARGE SCALE GENOMIC DNA]</scope>
    <source>
        <strain>cv. Nipponbare</strain>
    </source>
</reference>
<reference key="2">
    <citation type="journal article" date="2005" name="Nature">
        <title>The map-based sequence of the rice genome.</title>
        <authorList>
            <consortium name="International rice genome sequencing project (IRGSP)"/>
        </authorList>
    </citation>
    <scope>NUCLEOTIDE SEQUENCE [LARGE SCALE GENOMIC DNA]</scope>
    <source>
        <strain>cv. Nipponbare</strain>
    </source>
</reference>
<reference key="3">
    <citation type="journal article" date="2008" name="Nucleic Acids Res.">
        <title>The rice annotation project database (RAP-DB): 2008 update.</title>
        <authorList>
            <consortium name="The rice annotation project (RAP)"/>
        </authorList>
    </citation>
    <scope>GENOME REANNOTATION</scope>
    <source>
        <strain>cv. Nipponbare</strain>
    </source>
</reference>
<reference key="4">
    <citation type="journal article" date="2013" name="Rice">
        <title>Improvement of the Oryza sativa Nipponbare reference genome using next generation sequence and optical map data.</title>
        <authorList>
            <person name="Kawahara Y."/>
            <person name="de la Bastide M."/>
            <person name="Hamilton J.P."/>
            <person name="Kanamori H."/>
            <person name="McCombie W.R."/>
            <person name="Ouyang S."/>
            <person name="Schwartz D.C."/>
            <person name="Tanaka T."/>
            <person name="Wu J."/>
            <person name="Zhou S."/>
            <person name="Childs K.L."/>
            <person name="Davidson R.M."/>
            <person name="Lin H."/>
            <person name="Quesada-Ocampo L."/>
            <person name="Vaillancourt B."/>
            <person name="Sakai H."/>
            <person name="Lee S.S."/>
            <person name="Kim J."/>
            <person name="Numa H."/>
            <person name="Itoh T."/>
            <person name="Buell C.R."/>
            <person name="Matsumoto T."/>
        </authorList>
    </citation>
    <scope>GENOME REANNOTATION</scope>
    <source>
        <strain>cv. Nipponbare</strain>
    </source>
</reference>
<reference key="5">
    <citation type="journal article" date="2005" name="PLoS Biol.">
        <title>The genomes of Oryza sativa: a history of duplications.</title>
        <authorList>
            <person name="Yu J."/>
            <person name="Wang J."/>
            <person name="Lin W."/>
            <person name="Li S."/>
            <person name="Li H."/>
            <person name="Zhou J."/>
            <person name="Ni P."/>
            <person name="Dong W."/>
            <person name="Hu S."/>
            <person name="Zeng C."/>
            <person name="Zhang J."/>
            <person name="Zhang Y."/>
            <person name="Li R."/>
            <person name="Xu Z."/>
            <person name="Li S."/>
            <person name="Li X."/>
            <person name="Zheng H."/>
            <person name="Cong L."/>
            <person name="Lin L."/>
            <person name="Yin J."/>
            <person name="Geng J."/>
            <person name="Li G."/>
            <person name="Shi J."/>
            <person name="Liu J."/>
            <person name="Lv H."/>
            <person name="Li J."/>
            <person name="Wang J."/>
            <person name="Deng Y."/>
            <person name="Ran L."/>
            <person name="Shi X."/>
            <person name="Wang X."/>
            <person name="Wu Q."/>
            <person name="Li C."/>
            <person name="Ren X."/>
            <person name="Wang J."/>
            <person name="Wang X."/>
            <person name="Li D."/>
            <person name="Liu D."/>
            <person name="Zhang X."/>
            <person name="Ji Z."/>
            <person name="Zhao W."/>
            <person name="Sun Y."/>
            <person name="Zhang Z."/>
            <person name="Bao J."/>
            <person name="Han Y."/>
            <person name="Dong L."/>
            <person name="Ji J."/>
            <person name="Chen P."/>
            <person name="Wu S."/>
            <person name="Liu J."/>
            <person name="Xiao Y."/>
            <person name="Bu D."/>
            <person name="Tan J."/>
            <person name="Yang L."/>
            <person name="Ye C."/>
            <person name="Zhang J."/>
            <person name="Xu J."/>
            <person name="Zhou Y."/>
            <person name="Yu Y."/>
            <person name="Zhang B."/>
            <person name="Zhuang S."/>
            <person name="Wei H."/>
            <person name="Liu B."/>
            <person name="Lei M."/>
            <person name="Yu H."/>
            <person name="Li Y."/>
            <person name="Xu H."/>
            <person name="Wei S."/>
            <person name="He X."/>
            <person name="Fang L."/>
            <person name="Zhang Z."/>
            <person name="Zhang Y."/>
            <person name="Huang X."/>
            <person name="Su Z."/>
            <person name="Tong W."/>
            <person name="Li J."/>
            <person name="Tong Z."/>
            <person name="Li S."/>
            <person name="Ye J."/>
            <person name="Wang L."/>
            <person name="Fang L."/>
            <person name="Lei T."/>
            <person name="Chen C.-S."/>
            <person name="Chen H.-C."/>
            <person name="Xu Z."/>
            <person name="Li H."/>
            <person name="Huang H."/>
            <person name="Zhang F."/>
            <person name="Xu H."/>
            <person name="Li N."/>
            <person name="Zhao C."/>
            <person name="Li S."/>
            <person name="Dong L."/>
            <person name="Huang Y."/>
            <person name="Li L."/>
            <person name="Xi Y."/>
            <person name="Qi Q."/>
            <person name="Li W."/>
            <person name="Zhang B."/>
            <person name="Hu W."/>
            <person name="Zhang Y."/>
            <person name="Tian X."/>
            <person name="Jiao Y."/>
            <person name="Liang X."/>
            <person name="Jin J."/>
            <person name="Gao L."/>
            <person name="Zheng W."/>
            <person name="Hao B."/>
            <person name="Liu S.-M."/>
            <person name="Wang W."/>
            <person name="Yuan L."/>
            <person name="Cao M."/>
            <person name="McDermott J."/>
            <person name="Samudrala R."/>
            <person name="Wang J."/>
            <person name="Wong G.K.-S."/>
            <person name="Yang H."/>
        </authorList>
    </citation>
    <scope>NUCLEOTIDE SEQUENCE [LARGE SCALE GENOMIC DNA]</scope>
    <source>
        <strain>cv. Nipponbare</strain>
    </source>
</reference>
<reference key="6">
    <citation type="journal article" date="2003" name="Science">
        <title>Collection, mapping, and annotation of over 28,000 cDNA clones from japonica rice.</title>
        <authorList>
            <consortium name="The rice full-length cDNA consortium"/>
        </authorList>
    </citation>
    <scope>NUCLEOTIDE SEQUENCE [LARGE SCALE MRNA]</scope>
    <source>
        <strain>cv. Nipponbare</strain>
    </source>
</reference>
<organism>
    <name type="scientific">Oryza sativa subsp. japonica</name>
    <name type="common">Rice</name>
    <dbReference type="NCBI Taxonomy" id="39947"/>
    <lineage>
        <taxon>Eukaryota</taxon>
        <taxon>Viridiplantae</taxon>
        <taxon>Streptophyta</taxon>
        <taxon>Embryophyta</taxon>
        <taxon>Tracheophyta</taxon>
        <taxon>Spermatophyta</taxon>
        <taxon>Magnoliopsida</taxon>
        <taxon>Liliopsida</taxon>
        <taxon>Poales</taxon>
        <taxon>Poaceae</taxon>
        <taxon>BOP clade</taxon>
        <taxon>Oryzoideae</taxon>
        <taxon>Oryzeae</taxon>
        <taxon>Oryzinae</taxon>
        <taxon>Oryza</taxon>
        <taxon>Oryza sativa</taxon>
    </lineage>
</organism>
<feature type="transit peptide" description="Chloroplast" evidence="3">
    <location>
        <begin position="1"/>
        <end position="66"/>
    </location>
</feature>
<feature type="chain" id="PRO_0000419921" description="Sec-independent protein translocase protein TATA, chloroplastic">
    <location>
        <begin position="67"/>
        <end position="170"/>
    </location>
</feature>
<feature type="topological domain" description="Lumenal" evidence="3">
    <location>
        <begin position="67"/>
        <end position="83"/>
    </location>
</feature>
<feature type="transmembrane region" description="Helical" evidence="3">
    <location>
        <begin position="84"/>
        <end position="104"/>
    </location>
</feature>
<feature type="topological domain" description="Stromal" evidence="3">
    <location>
        <begin position="105"/>
        <end position="170"/>
    </location>
</feature>
<feature type="region of interest" description="Disordered" evidence="4">
    <location>
        <begin position="1"/>
        <end position="20"/>
    </location>
</feature>
<feature type="region of interest" description="Disordered" evidence="4">
    <location>
        <begin position="130"/>
        <end position="170"/>
    </location>
</feature>
<name>TATA_ORYSJ</name>